<sequence>MERREFCASLLAGGTAGMCVDLILFPLDTIKTRLQSPLGFSKSGGFRGIYAGVPSTAVGSFPNAAAFFVTYESAKQLLRSDSSYLSPIIHMAAASLGEVVACLIRVPSEVIKQRAQVSPSSTTYQMLSATLRQEGIKGLYRGYKSTVLREIPFSLVQFPLWESLKDLWSWKQGRAVDSWQSAVCGAFAGGFAAALTTPLDVAKTRIMLAKAGSGVASGNVLFALHEIWRTQGIMGLFAGVIPRMTAISLGGFIFLGAYDKVRTLMLREQ</sequence>
<proteinExistence type="evidence at transcript level"/>
<feature type="chain" id="PRO_0000317591" description="Mitochondrial S-adenosylmethionine carrier protein">
    <location>
        <begin position="1"/>
        <end position="269"/>
    </location>
</feature>
<feature type="transmembrane region" description="Helical; Name=1" evidence="2">
    <location>
        <begin position="5"/>
        <end position="25"/>
    </location>
</feature>
<feature type="transmembrane region" description="Helical; Name=2" evidence="2">
    <location>
        <begin position="49"/>
        <end position="69"/>
    </location>
</feature>
<feature type="transmembrane region" description="Helical; Name=3" evidence="2">
    <location>
        <begin position="84"/>
        <end position="104"/>
    </location>
</feature>
<feature type="transmembrane region" description="Helical; Name=4" evidence="2">
    <location>
        <begin position="141"/>
        <end position="161"/>
    </location>
</feature>
<feature type="transmembrane region" description="Helical; Name=5" evidence="2">
    <location>
        <begin position="181"/>
        <end position="201"/>
    </location>
</feature>
<feature type="transmembrane region" description="Helical; Name=6" evidence="2">
    <location>
        <begin position="237"/>
        <end position="257"/>
    </location>
</feature>
<feature type="repeat" description="Solcar 1">
    <location>
        <begin position="4"/>
        <end position="77"/>
    </location>
</feature>
<feature type="repeat" description="Solcar 2">
    <location>
        <begin position="85"/>
        <end position="167"/>
    </location>
</feature>
<feature type="repeat" description="Solcar 3">
    <location>
        <begin position="176"/>
        <end position="264"/>
    </location>
</feature>
<comment type="function">
    <text evidence="1">Mitochondrial S-adenosyl-L-methionine/S-adenosyl-L-homocysteine antiporter. Mediates the exchange of cytosolic S-adenosyl-L-methionine, the predominant methyl-group donor for macromolecule methylation processes, for mitochondrial S-adenosylhomocysteine(SAH), a by-product of methylation reactions.</text>
</comment>
<comment type="catalytic activity">
    <reaction evidence="1">
        <text>S-adenosyl-L-homocysteine(out) + S-adenosyl-L-methionine(in) = S-adenosyl-L-homocysteine(in) + S-adenosyl-L-methionine(out)</text>
        <dbReference type="Rhea" id="RHEA:75479"/>
        <dbReference type="ChEBI" id="CHEBI:57856"/>
        <dbReference type="ChEBI" id="CHEBI:59789"/>
    </reaction>
</comment>
<comment type="subcellular location">
    <subcellularLocation>
        <location evidence="1">Mitochondrion inner membrane</location>
        <topology evidence="2">Multi-pass membrane protein</topology>
    </subcellularLocation>
</comment>
<comment type="similarity">
    <text evidence="3">Belongs to the mitochondrial carrier (TC 2.A.29) family.</text>
</comment>
<accession>Q6GLA2</accession>
<dbReference type="EMBL" id="BC074600">
    <property type="protein sequence ID" value="AAH74600.1"/>
    <property type="molecule type" value="mRNA"/>
</dbReference>
<dbReference type="RefSeq" id="NP_001004820.1">
    <property type="nucleotide sequence ID" value="NM_001004820.1"/>
</dbReference>
<dbReference type="SMR" id="Q6GLA2"/>
<dbReference type="FunCoup" id="Q6GLA2">
    <property type="interactions" value="1680"/>
</dbReference>
<dbReference type="STRING" id="8364.ENSXETP00000000795"/>
<dbReference type="PaxDb" id="8364-ENSXETP00000056365"/>
<dbReference type="DNASU" id="448074"/>
<dbReference type="GeneID" id="448074"/>
<dbReference type="KEGG" id="xtr:448074"/>
<dbReference type="AGR" id="Xenbase:XB-GENE-991471"/>
<dbReference type="CTD" id="115286"/>
<dbReference type="Xenbase" id="XB-GENE-991471">
    <property type="gene designation" value="slc25a26"/>
</dbReference>
<dbReference type="eggNOG" id="KOG0768">
    <property type="taxonomic scope" value="Eukaryota"/>
</dbReference>
<dbReference type="InParanoid" id="Q6GLA2"/>
<dbReference type="OrthoDB" id="276989at2759"/>
<dbReference type="Reactome" id="R-XTR-425393">
    <property type="pathway name" value="Transport of inorganic cations/anions and amino acids/oligopeptides"/>
</dbReference>
<dbReference type="Proteomes" id="UP000008143">
    <property type="component" value="Chromosome 4"/>
</dbReference>
<dbReference type="GO" id="GO:0005743">
    <property type="term" value="C:mitochondrial inner membrane"/>
    <property type="evidence" value="ECO:0000250"/>
    <property type="project" value="UniProtKB"/>
</dbReference>
<dbReference type="GO" id="GO:0000095">
    <property type="term" value="F:S-adenosyl-L-methionine transmembrane transporter activity"/>
    <property type="evidence" value="ECO:0000250"/>
    <property type="project" value="UniProtKB"/>
</dbReference>
<dbReference type="GO" id="GO:0180003">
    <property type="term" value="F:S-adenosyl-L-methionine:S-adenosyl-L-homocysteine antiporter activity"/>
    <property type="evidence" value="ECO:0000250"/>
    <property type="project" value="UniProtKB"/>
</dbReference>
<dbReference type="GO" id="GO:1990543">
    <property type="term" value="P:mitochondrial S-adenosyl-L-methionine transmembrane transport"/>
    <property type="evidence" value="ECO:0000250"/>
    <property type="project" value="UniProtKB"/>
</dbReference>
<dbReference type="GO" id="GO:0015805">
    <property type="term" value="P:S-adenosyl-L-methionine transport"/>
    <property type="evidence" value="ECO:0000250"/>
    <property type="project" value="UniProtKB"/>
</dbReference>
<dbReference type="FunFam" id="1.50.40.10:FF:000018">
    <property type="entry name" value="S-adenosylmethionine mitochondrial carrier protein-like"/>
    <property type="match status" value="1"/>
</dbReference>
<dbReference type="Gene3D" id="1.50.40.10">
    <property type="entry name" value="Mitochondrial carrier domain"/>
    <property type="match status" value="1"/>
</dbReference>
<dbReference type="InterPro" id="IPR002067">
    <property type="entry name" value="Mit_carrier"/>
</dbReference>
<dbReference type="InterPro" id="IPR018108">
    <property type="entry name" value="Mitochondrial_sb/sol_carrier"/>
</dbReference>
<dbReference type="InterPro" id="IPR023395">
    <property type="entry name" value="Mt_carrier_dom_sf"/>
</dbReference>
<dbReference type="PANTHER" id="PTHR45667">
    <property type="entry name" value="S-ADENOSYLMETHIONINE MITOCHONDRIAL CARRIER PROTEIN"/>
    <property type="match status" value="1"/>
</dbReference>
<dbReference type="Pfam" id="PF00153">
    <property type="entry name" value="Mito_carr"/>
    <property type="match status" value="4"/>
</dbReference>
<dbReference type="PRINTS" id="PR00926">
    <property type="entry name" value="MITOCARRIER"/>
</dbReference>
<dbReference type="SUPFAM" id="SSF103506">
    <property type="entry name" value="Mitochondrial carrier"/>
    <property type="match status" value="1"/>
</dbReference>
<dbReference type="PROSITE" id="PS50920">
    <property type="entry name" value="SOLCAR"/>
    <property type="match status" value="3"/>
</dbReference>
<protein>
    <recommendedName>
        <fullName evidence="1">Mitochondrial S-adenosylmethionine carrier protein</fullName>
        <shortName evidence="1">SAM carrier</shortName>
    </recommendedName>
    <alternativeName>
        <fullName>Solute carrier family 25 member 26</fullName>
    </alternativeName>
</protein>
<reference key="1">
    <citation type="submission" date="2004-06" db="EMBL/GenBank/DDBJ databases">
        <authorList>
            <consortium name="NIH - Xenopus Gene Collection (XGC) project"/>
        </authorList>
    </citation>
    <scope>NUCLEOTIDE SEQUENCE [LARGE SCALE MRNA]</scope>
    <source>
        <tissue>Embryo</tissue>
    </source>
</reference>
<name>SAMC_XENTR</name>
<gene>
    <name type="primary">slc25a26</name>
    <name evidence="1" type="synonym">samc</name>
</gene>
<organism>
    <name type="scientific">Xenopus tropicalis</name>
    <name type="common">Western clawed frog</name>
    <name type="synonym">Silurana tropicalis</name>
    <dbReference type="NCBI Taxonomy" id="8364"/>
    <lineage>
        <taxon>Eukaryota</taxon>
        <taxon>Metazoa</taxon>
        <taxon>Chordata</taxon>
        <taxon>Craniata</taxon>
        <taxon>Vertebrata</taxon>
        <taxon>Euteleostomi</taxon>
        <taxon>Amphibia</taxon>
        <taxon>Batrachia</taxon>
        <taxon>Anura</taxon>
        <taxon>Pipoidea</taxon>
        <taxon>Pipidae</taxon>
        <taxon>Xenopodinae</taxon>
        <taxon>Xenopus</taxon>
        <taxon>Silurana</taxon>
    </lineage>
</organism>
<keyword id="KW-0050">Antiport</keyword>
<keyword id="KW-0472">Membrane</keyword>
<keyword id="KW-0496">Mitochondrion</keyword>
<keyword id="KW-0999">Mitochondrion inner membrane</keyword>
<keyword id="KW-1185">Reference proteome</keyword>
<keyword id="KW-0677">Repeat</keyword>
<keyword id="KW-0949">S-adenosyl-L-methionine</keyword>
<keyword id="KW-0812">Transmembrane</keyword>
<keyword id="KW-1133">Transmembrane helix</keyword>
<keyword id="KW-0813">Transport</keyword>
<evidence type="ECO:0000250" key="1">
    <source>
        <dbReference type="UniProtKB" id="Q70HW3"/>
    </source>
</evidence>
<evidence type="ECO:0000255" key="2"/>
<evidence type="ECO:0000305" key="3"/>